<evidence type="ECO:0000250" key="1">
    <source>
        <dbReference type="UniProtKB" id="Q8CY87"/>
    </source>
</evidence>
<evidence type="ECO:0000255" key="2">
    <source>
        <dbReference type="HAMAP-Rule" id="MF_00867"/>
    </source>
</evidence>
<evidence type="ECO:0000255" key="3">
    <source>
        <dbReference type="PROSITE-ProRule" id="PRU00382"/>
    </source>
</evidence>
<evidence type="ECO:0000269" key="4">
    <source>
    </source>
</evidence>
<evidence type="ECO:0000269" key="5">
    <source>
    </source>
</evidence>
<evidence type="ECO:0000303" key="6">
    <source>
    </source>
</evidence>
<evidence type="ECO:0000303" key="7">
    <source>
    </source>
</evidence>
<evidence type="ECO:0000305" key="8"/>
<evidence type="ECO:0000305" key="9">
    <source>
    </source>
</evidence>
<evidence type="ECO:0000305" key="10">
    <source>
    </source>
</evidence>
<reference key="1">
    <citation type="journal article" date="2007" name="J. Bacteriol.">
        <title>Genome sequence of Avery's virulent serotype 2 strain D39 of Streptococcus pneumoniae and comparison with that of unencapsulated laboratory strain R6.</title>
        <authorList>
            <person name="Lanie J.A."/>
            <person name="Ng W.-L."/>
            <person name="Kazmierczak K.M."/>
            <person name="Andrzejewski T.M."/>
            <person name="Davidsen T.M."/>
            <person name="Wayne K.J."/>
            <person name="Tettelin H."/>
            <person name="Glass J.I."/>
            <person name="Winkler M.E."/>
        </authorList>
    </citation>
    <scope>NUCLEOTIDE SEQUENCE [LARGE SCALE GENOMIC DNA]</scope>
    <source>
        <strain>D39 / NCTC 7466</strain>
    </source>
</reference>
<reference key="2">
    <citation type="journal article" date="2017" name="Mol. Microbiol.">
        <title>Identification of EloR (Spr1851) as a regulator of cell elongation in Streptococcus pneumoniae.</title>
        <authorList>
            <person name="Stamsaas G.A."/>
            <person name="Straume D."/>
            <person name="Ruud Winther A."/>
            <person name="Kjos M."/>
            <person name="Frantzen C.A."/>
            <person name="Haavarstein L.S."/>
        </authorList>
    </citation>
    <scope>PROBABLE SUBCELLULAR LOCATION</scope>
    <source>
        <strain>D39 / NCTC 7466</strain>
    </source>
</reference>
<reference key="3">
    <citation type="journal article" date="2017" name="Mol. Microbiol.">
        <title>Absence of the KhpA and KhpB (JAG/EloR) RNA-binding proteins suppresses the requirement for PBP2b by overproduction of FtsA in Streptococcus pneumoniae D39.</title>
        <authorList>
            <person name="Zheng J.J."/>
            <person name="Perez A.J."/>
            <person name="Tsui H.T."/>
            <person name="Massidda O."/>
            <person name="Winkler M.E."/>
        </authorList>
    </citation>
    <scope>IDENTIFICATION BY MASS SPECTROMETRY</scope>
    <scope>FUNCTION</scope>
    <scope>INTERACTION WITH KHPA</scope>
    <scope>SUBUNIT</scope>
    <scope>SUBCELLULAR LOCATION</scope>
    <scope>DOMAIN</scope>
    <scope>DISRUPTION PHENOTYPE</scope>
    <scope>RNA-BINDING</scope>
    <scope>MUTAGENESIS OF THR-89</scope>
    <source>
        <strain>D39 / NCTC 7466</strain>
    </source>
</reference>
<feature type="chain" id="PRO_0000454543" description="RNA-binding protein KhpB">
    <location>
        <begin position="1"/>
        <end position="328"/>
    </location>
</feature>
<feature type="domain" description="KH" evidence="10">
    <location>
        <begin position="181"/>
        <end position="258"/>
    </location>
</feature>
<feature type="domain" description="R3H" evidence="3 10">
    <location>
        <begin position="263"/>
        <end position="328"/>
    </location>
</feature>
<feature type="region of interest" description="Jag_N domain" evidence="10">
    <location>
        <begin position="3"/>
        <end position="53"/>
    </location>
</feature>
<feature type="region of interest" description="Linker" evidence="10">
    <location>
        <begin position="54"/>
        <end position="180"/>
    </location>
</feature>
<feature type="modified residue" description="Phosphothreonine" evidence="1">
    <location>
        <position position="89"/>
    </location>
</feature>
<feature type="mutagenesis site" description="No visible effect on cell growth or shape." evidence="5">
    <original>T</original>
    <variation>A</variation>
    <variation>D</variation>
    <variation>E</variation>
    <location>
        <position position="89"/>
    </location>
</feature>
<gene>
    <name evidence="2 7" type="primary">kphB</name>
    <name evidence="2" type="synonym">eloR</name>
    <name evidence="8" type="synonym">jag</name>
    <name type="ordered locus">SPD_1849</name>
</gene>
<keyword id="KW-0133">Cell shape</keyword>
<keyword id="KW-0961">Cell wall biogenesis/degradation</keyword>
<keyword id="KW-0143">Chaperone</keyword>
<keyword id="KW-0963">Cytoplasm</keyword>
<keyword id="KW-0597">Phosphoprotein</keyword>
<keyword id="KW-1185">Reference proteome</keyword>
<keyword id="KW-0694">RNA-binding</keyword>
<protein>
    <recommendedName>
        <fullName evidence="2 7">RNA-binding protein KhpB</fullName>
    </recommendedName>
    <alternativeName>
        <fullName evidence="6">Elongasome regulating protein</fullName>
        <shortName evidence="6">EloR</shortName>
    </alternativeName>
    <alternativeName>
        <fullName evidence="7">KH-domain protein B</fullName>
    </alternativeName>
    <alternativeName>
        <fullName evidence="2">RNA-binding protein EloR</fullName>
    </alternativeName>
    <alternativeName>
        <fullName evidence="8">RNA-binding protein Jag</fullName>
    </alternativeName>
</protein>
<name>KHPB_STRP2</name>
<accession>A0A0H2ZPS7</accession>
<dbReference type="EMBL" id="CP000410">
    <property type="protein sequence ID" value="ABJ55280.1"/>
    <property type="molecule type" value="Genomic_DNA"/>
</dbReference>
<dbReference type="RefSeq" id="WP_000260012.1">
    <property type="nucleotide sequence ID" value="NZ_JAMLJR010000015.1"/>
</dbReference>
<dbReference type="PaxDb" id="373153-SPD_1849"/>
<dbReference type="KEGG" id="spd:SPD_1849"/>
<dbReference type="eggNOG" id="COG1847">
    <property type="taxonomic scope" value="Bacteria"/>
</dbReference>
<dbReference type="HOGENOM" id="CLU_042512_0_0_9"/>
<dbReference type="BioCyc" id="SPNE373153:G1G6V-1995-MONOMER"/>
<dbReference type="Proteomes" id="UP000001452">
    <property type="component" value="Chromosome"/>
</dbReference>
<dbReference type="GO" id="GO:0005737">
    <property type="term" value="C:cytoplasm"/>
    <property type="evidence" value="ECO:0007669"/>
    <property type="project" value="UniProtKB-SubCell"/>
</dbReference>
<dbReference type="GO" id="GO:0003723">
    <property type="term" value="F:RNA binding"/>
    <property type="evidence" value="ECO:0007669"/>
    <property type="project" value="UniProtKB-UniRule"/>
</dbReference>
<dbReference type="GO" id="GO:0071555">
    <property type="term" value="P:cell wall organization"/>
    <property type="evidence" value="ECO:0007669"/>
    <property type="project" value="UniProtKB-KW"/>
</dbReference>
<dbReference type="GO" id="GO:0009252">
    <property type="term" value="P:peptidoglycan biosynthetic process"/>
    <property type="evidence" value="ECO:0007669"/>
    <property type="project" value="UniProtKB-UniRule"/>
</dbReference>
<dbReference type="GO" id="GO:0008360">
    <property type="term" value="P:regulation of cell shape"/>
    <property type="evidence" value="ECO:0007669"/>
    <property type="project" value="UniProtKB-KW"/>
</dbReference>
<dbReference type="CDD" id="cd02414">
    <property type="entry name" value="KH-II_Jag"/>
    <property type="match status" value="1"/>
</dbReference>
<dbReference type="CDD" id="cd02644">
    <property type="entry name" value="R3H_jag"/>
    <property type="match status" value="1"/>
</dbReference>
<dbReference type="Gene3D" id="3.30.300.20">
    <property type="match status" value="1"/>
</dbReference>
<dbReference type="Gene3D" id="3.30.30.80">
    <property type="entry name" value="probable RNA-binding protein from clostridium symbiosum atcc 14940"/>
    <property type="match status" value="1"/>
</dbReference>
<dbReference type="Gene3D" id="3.30.1370.50">
    <property type="entry name" value="R3H-like domain"/>
    <property type="match status" value="1"/>
</dbReference>
<dbReference type="HAMAP" id="MF_00867">
    <property type="entry name" value="KhpB"/>
    <property type="match status" value="1"/>
</dbReference>
<dbReference type="InterPro" id="IPR038008">
    <property type="entry name" value="Jag_KH"/>
</dbReference>
<dbReference type="InterPro" id="IPR038247">
    <property type="entry name" value="Jag_N_dom_sf"/>
</dbReference>
<dbReference type="InterPro" id="IPR015946">
    <property type="entry name" value="KH_dom-like_a/b"/>
</dbReference>
<dbReference type="InterPro" id="IPR039247">
    <property type="entry name" value="KhpB"/>
</dbReference>
<dbReference type="InterPro" id="IPR032782">
    <property type="entry name" value="KhpB_N"/>
</dbReference>
<dbReference type="InterPro" id="IPR001374">
    <property type="entry name" value="R3H_dom"/>
</dbReference>
<dbReference type="InterPro" id="IPR036867">
    <property type="entry name" value="R3H_dom_sf"/>
</dbReference>
<dbReference type="InterPro" id="IPR034079">
    <property type="entry name" value="R3H_KhpB"/>
</dbReference>
<dbReference type="NCBIfam" id="NF041568">
    <property type="entry name" value="Jag_EloR"/>
    <property type="match status" value="1"/>
</dbReference>
<dbReference type="PANTHER" id="PTHR35800">
    <property type="entry name" value="PROTEIN JAG"/>
    <property type="match status" value="1"/>
</dbReference>
<dbReference type="PANTHER" id="PTHR35800:SF1">
    <property type="entry name" value="RNA-BINDING PROTEIN KHPB"/>
    <property type="match status" value="1"/>
</dbReference>
<dbReference type="Pfam" id="PF14804">
    <property type="entry name" value="Jag_N"/>
    <property type="match status" value="1"/>
</dbReference>
<dbReference type="Pfam" id="PF13083">
    <property type="entry name" value="KH_KhpA-B"/>
    <property type="match status" value="1"/>
</dbReference>
<dbReference type="Pfam" id="PF01424">
    <property type="entry name" value="R3H"/>
    <property type="match status" value="1"/>
</dbReference>
<dbReference type="SMART" id="SM01245">
    <property type="entry name" value="Jag_N"/>
    <property type="match status" value="1"/>
</dbReference>
<dbReference type="SMART" id="SM00393">
    <property type="entry name" value="R3H"/>
    <property type="match status" value="1"/>
</dbReference>
<dbReference type="SUPFAM" id="SSF82708">
    <property type="entry name" value="R3H domain"/>
    <property type="match status" value="1"/>
</dbReference>
<dbReference type="PROSITE" id="PS51061">
    <property type="entry name" value="R3H"/>
    <property type="match status" value="1"/>
</dbReference>
<comment type="function">
    <text evidence="2">A probable RNA chaperone. Forms a complex with KhpA which binds to cellular RNA and controls its expression. Plays a role in peptidoglycan (PG) homeostasis and cell length regulation.</text>
</comment>
<comment type="function">
    <text evidence="5 10">Forms a complex with KhpA which presumably binds to about 170 cellular RNAs (mRNA, tRNA intergenic RNA and sRNAs); the proteins alone each bind the same set of RNAs. Suppresses the requirement for PBP2b (penA, a transpeptidase) in peripheral peptidoglycan (PG) synthesis (PubMed:28941257). May function as a pleiotropic RNA chaperone controlling pneumococcal cell division, including PG homeostasis and regulating peripheral PG synthesis by the elongasome (Probable).</text>
</comment>
<comment type="subunit">
    <text evidence="1 5">Interacts with KhpA; the 2 proteins colocalize throughout the cell cycle, with some increase at midcell in dividing cells (PubMed:28941257). Interacts with StkP which phosphorylates it, interacts with MltG, MreC, RodZ and YidC2 (By similarity).</text>
</comment>
<comment type="subcellular location">
    <subcellularLocation>
        <location evidence="2 9">Cytoplasm</location>
    </subcellularLocation>
    <text evidence="4">Some protein localizes to midcell in the septal area, the rest remains in the cytoplasm.</text>
</comment>
<comment type="domain">
    <text evidence="10">Has an N-terminal Jag-N domain, a linker with a phosphorylated Thr, and 2 RNA-binding domains (KH and R3H).</text>
</comment>
<comment type="PTM">
    <text evidence="1">Phosphorylated on Thr-89 by StkP; there is another poorly phosphorylated residue in the protein. Dephosphorylated by PhpP.</text>
</comment>
<comment type="disruption phenotype">
    <text evidence="5">Suppresses a pbp2b (penA) deletion, grows slowly and is smaller than wild-type; about 50% of the volume of wild-type cells. Increased accumulation of FtsA and FtsZ protein. Significant up-regulation of genes of the WalRK regulon. Also partially suppresses deletions in other genes involved in peripheral PG synthesis; gpsB, mreCD, rodA and rodZ but not mltG. Slight decrease in net phosphorylation (by StpK/PhpP) of DivIA and MapZ/StpK. Double khpA-khpB deletions have the same phenotypes.</text>
</comment>
<comment type="similarity">
    <text evidence="2">Belongs to the KhpB RNA-binding protein family.</text>
</comment>
<proteinExistence type="evidence at protein level"/>
<sequence length="328" mass="37110">MVVFTGSTVEEAIQKGLKELDIPRMKAHIKVISREKKGFLGLFGKKPAQVDIEAISETTVVKANQQVVKGVPKKINDLNEPVKTVSEETVDLGHVVDAIKKIEEEGQGISDEVKAEILKHERHASTILEETGHIEILNELQIEEAMREEAGADDLETEQDQAESQELEDLGLKVETNFDIEQVATEVMAYVQTIIDDMDVEATLSNDYNRRSINLQIDTNEPGRIIGYHGKVLKALQLLAQNYLYNRYSRTFYVTINVNDYVEHRAEVLQTYAQKLATRVLEEGRSHKTDPMSNSERKIIHRIISRMDGVTSYSEGDEPNRYVVVDTE</sequence>
<organism>
    <name type="scientific">Streptococcus pneumoniae serotype 2 (strain D39 / NCTC 7466)</name>
    <dbReference type="NCBI Taxonomy" id="373153"/>
    <lineage>
        <taxon>Bacteria</taxon>
        <taxon>Bacillati</taxon>
        <taxon>Bacillota</taxon>
        <taxon>Bacilli</taxon>
        <taxon>Lactobacillales</taxon>
        <taxon>Streptococcaceae</taxon>
        <taxon>Streptococcus</taxon>
    </lineage>
</organism>